<name>END4_BIFLS</name>
<protein>
    <recommendedName>
        <fullName evidence="1">Probable endonuclease 4</fullName>
        <ecNumber evidence="1">3.1.21.2</ecNumber>
    </recommendedName>
    <alternativeName>
        <fullName evidence="1">Endodeoxyribonuclease IV</fullName>
    </alternativeName>
    <alternativeName>
        <fullName evidence="1">Endonuclease IV</fullName>
    </alternativeName>
</protein>
<gene>
    <name evidence="1" type="primary">nfo</name>
    <name type="ordered locus">Blon_1373</name>
    <name type="ordered locus">BLIJ_1417</name>
</gene>
<organism>
    <name type="scientific">Bifidobacterium longum subsp. infantis (strain ATCC 15697 / DSM 20088 / JCM 1222 / NCTC 11817 / S12)</name>
    <dbReference type="NCBI Taxonomy" id="391904"/>
    <lineage>
        <taxon>Bacteria</taxon>
        <taxon>Bacillati</taxon>
        <taxon>Actinomycetota</taxon>
        <taxon>Actinomycetes</taxon>
        <taxon>Bifidobacteriales</taxon>
        <taxon>Bifidobacteriaceae</taxon>
        <taxon>Bifidobacterium</taxon>
    </lineage>
</organism>
<keyword id="KW-0227">DNA damage</keyword>
<keyword id="KW-0234">DNA repair</keyword>
<keyword id="KW-0255">Endonuclease</keyword>
<keyword id="KW-0378">Hydrolase</keyword>
<keyword id="KW-0479">Metal-binding</keyword>
<keyword id="KW-0540">Nuclease</keyword>
<keyword id="KW-0862">Zinc</keyword>
<proteinExistence type="inferred from homology"/>
<sequence length="284" mass="30938">MTELYIGSHLSTAGGWNALLERSHEEGGTAFAFFPRSPYGKRSKALDPADAATFGARLKAEDYGPLVVHAPYVYNLAGKDEAKRAFAIEALAEDIELLTAIREAGQEVYINIHPGAHVGQGTKTGCQLISEGLNQVFERTTGVMVLLETMAGKGTECGRNFEELATIMNGVKNKANVGVTFDTCHVLDAGYDLVNDYDGVMRQLDEAIGLAKVKAIHVNDSQFGLDSHKDRHANIGQGQLGIPFFTRLVNDPIMAKLPMILETKEQTPATHRDEIELLRGLVQK</sequence>
<evidence type="ECO:0000255" key="1">
    <source>
        <dbReference type="HAMAP-Rule" id="MF_00152"/>
    </source>
</evidence>
<accession>B7GRN1</accession>
<accession>E8MKC3</accession>
<reference key="1">
    <citation type="journal article" date="2008" name="Proc. Natl. Acad. Sci. U.S.A.">
        <title>The genome sequence of Bifidobacterium longum subsp. infantis reveals adaptations for milk utilization within the infant microbiome.</title>
        <authorList>
            <person name="Sela D.A."/>
            <person name="Chapman J."/>
            <person name="Adeuya A."/>
            <person name="Kim J.H."/>
            <person name="Chen F."/>
            <person name="Whitehead T.R."/>
            <person name="Lapidus A."/>
            <person name="Rokhsar D.S."/>
            <person name="Lebrilla C.B."/>
            <person name="German J.B."/>
            <person name="Price N.P."/>
            <person name="Richardson P.M."/>
            <person name="Mills D.A."/>
        </authorList>
    </citation>
    <scope>NUCLEOTIDE SEQUENCE [LARGE SCALE GENOMIC DNA]</scope>
    <source>
        <strain>ATCC 15697 / DSM 20088 / JCM 1222 / NCTC 11817 / S12</strain>
    </source>
</reference>
<reference key="2">
    <citation type="journal article" date="2011" name="Nature">
        <title>Bifidobacteria can protect from enteropathogenic infection through production of acetate.</title>
        <authorList>
            <person name="Fukuda S."/>
            <person name="Toh H."/>
            <person name="Hase K."/>
            <person name="Oshima K."/>
            <person name="Nakanishi Y."/>
            <person name="Yoshimura K."/>
            <person name="Tobe T."/>
            <person name="Clarke J.M."/>
            <person name="Topping D.L."/>
            <person name="Suzuki T."/>
            <person name="Taylor T.D."/>
            <person name="Itoh K."/>
            <person name="Kikuchi J."/>
            <person name="Morita H."/>
            <person name="Hattori M."/>
            <person name="Ohno H."/>
        </authorList>
    </citation>
    <scope>NUCLEOTIDE SEQUENCE [LARGE SCALE GENOMIC DNA]</scope>
    <source>
        <strain>ATCC 15697 / DSM 20088 / JCM 1222 / NCTC 11817 / S12</strain>
    </source>
</reference>
<feature type="chain" id="PRO_1000123319" description="Probable endonuclease 4">
    <location>
        <begin position="1"/>
        <end position="284"/>
    </location>
</feature>
<feature type="binding site" evidence="1">
    <location>
        <position position="69"/>
    </location>
    <ligand>
        <name>Zn(2+)</name>
        <dbReference type="ChEBI" id="CHEBI:29105"/>
        <label>1</label>
    </ligand>
</feature>
<feature type="binding site" evidence="1">
    <location>
        <position position="113"/>
    </location>
    <ligand>
        <name>Zn(2+)</name>
        <dbReference type="ChEBI" id="CHEBI:29105"/>
        <label>1</label>
    </ligand>
</feature>
<feature type="binding site" evidence="1">
    <location>
        <position position="148"/>
    </location>
    <ligand>
        <name>Zn(2+)</name>
        <dbReference type="ChEBI" id="CHEBI:29105"/>
        <label>1</label>
    </ligand>
</feature>
<feature type="binding site" evidence="1">
    <location>
        <position position="148"/>
    </location>
    <ligand>
        <name>Zn(2+)</name>
        <dbReference type="ChEBI" id="CHEBI:29105"/>
        <label>2</label>
    </ligand>
</feature>
<feature type="binding site" evidence="1">
    <location>
        <position position="182"/>
    </location>
    <ligand>
        <name>Zn(2+)</name>
        <dbReference type="ChEBI" id="CHEBI:29105"/>
        <label>2</label>
    </ligand>
</feature>
<feature type="binding site" evidence="1">
    <location>
        <position position="185"/>
    </location>
    <ligand>
        <name>Zn(2+)</name>
        <dbReference type="ChEBI" id="CHEBI:29105"/>
        <label>3</label>
    </ligand>
</feature>
<feature type="binding site" evidence="1">
    <location>
        <position position="217"/>
    </location>
    <ligand>
        <name>Zn(2+)</name>
        <dbReference type="ChEBI" id="CHEBI:29105"/>
        <label>2</label>
    </ligand>
</feature>
<feature type="binding site" evidence="1">
    <location>
        <position position="230"/>
    </location>
    <ligand>
        <name>Zn(2+)</name>
        <dbReference type="ChEBI" id="CHEBI:29105"/>
        <label>3</label>
    </ligand>
</feature>
<feature type="binding site" evidence="1">
    <location>
        <position position="232"/>
    </location>
    <ligand>
        <name>Zn(2+)</name>
        <dbReference type="ChEBI" id="CHEBI:29105"/>
        <label>3</label>
    </ligand>
</feature>
<feature type="binding site" evidence="1">
    <location>
        <position position="262"/>
    </location>
    <ligand>
        <name>Zn(2+)</name>
        <dbReference type="ChEBI" id="CHEBI:29105"/>
        <label>2</label>
    </ligand>
</feature>
<dbReference type="EC" id="3.1.21.2" evidence="1"/>
<dbReference type="EMBL" id="CP001095">
    <property type="protein sequence ID" value="ACJ52461.1"/>
    <property type="molecule type" value="Genomic_DNA"/>
</dbReference>
<dbReference type="EMBL" id="AP010889">
    <property type="protein sequence ID" value="BAJ69000.1"/>
    <property type="molecule type" value="Genomic_DNA"/>
</dbReference>
<dbReference type="RefSeq" id="WP_012577712.1">
    <property type="nucleotide sequence ID" value="NC_011593.1"/>
</dbReference>
<dbReference type="SMR" id="B7GRN1"/>
<dbReference type="KEGG" id="bln:Blon_1373"/>
<dbReference type="KEGG" id="blon:BLIJ_1417"/>
<dbReference type="PATRIC" id="fig|391904.8.peg.1426"/>
<dbReference type="HOGENOM" id="CLU_025885_4_1_11"/>
<dbReference type="Proteomes" id="UP000001360">
    <property type="component" value="Chromosome"/>
</dbReference>
<dbReference type="GO" id="GO:0008833">
    <property type="term" value="F:deoxyribonuclease IV (phage-T4-induced) activity"/>
    <property type="evidence" value="ECO:0007669"/>
    <property type="project" value="UniProtKB-UniRule"/>
</dbReference>
<dbReference type="GO" id="GO:0003677">
    <property type="term" value="F:DNA binding"/>
    <property type="evidence" value="ECO:0007669"/>
    <property type="project" value="InterPro"/>
</dbReference>
<dbReference type="GO" id="GO:0003906">
    <property type="term" value="F:DNA-(apurinic or apyrimidinic site) endonuclease activity"/>
    <property type="evidence" value="ECO:0007669"/>
    <property type="project" value="TreeGrafter"/>
</dbReference>
<dbReference type="GO" id="GO:0008081">
    <property type="term" value="F:phosphoric diester hydrolase activity"/>
    <property type="evidence" value="ECO:0007669"/>
    <property type="project" value="TreeGrafter"/>
</dbReference>
<dbReference type="GO" id="GO:0008270">
    <property type="term" value="F:zinc ion binding"/>
    <property type="evidence" value="ECO:0007669"/>
    <property type="project" value="UniProtKB-UniRule"/>
</dbReference>
<dbReference type="GO" id="GO:0006284">
    <property type="term" value="P:base-excision repair"/>
    <property type="evidence" value="ECO:0007669"/>
    <property type="project" value="TreeGrafter"/>
</dbReference>
<dbReference type="CDD" id="cd00019">
    <property type="entry name" value="AP2Ec"/>
    <property type="match status" value="1"/>
</dbReference>
<dbReference type="FunFam" id="3.20.20.150:FF:000001">
    <property type="entry name" value="Probable endonuclease 4"/>
    <property type="match status" value="1"/>
</dbReference>
<dbReference type="Gene3D" id="3.20.20.150">
    <property type="entry name" value="Divalent-metal-dependent TIM barrel enzymes"/>
    <property type="match status" value="1"/>
</dbReference>
<dbReference type="HAMAP" id="MF_00152">
    <property type="entry name" value="Nfo"/>
    <property type="match status" value="1"/>
</dbReference>
<dbReference type="InterPro" id="IPR001719">
    <property type="entry name" value="AP_endonuc_2"/>
</dbReference>
<dbReference type="InterPro" id="IPR018246">
    <property type="entry name" value="AP_endonuc_F2_Zn_BS"/>
</dbReference>
<dbReference type="InterPro" id="IPR036237">
    <property type="entry name" value="Xyl_isomerase-like_sf"/>
</dbReference>
<dbReference type="InterPro" id="IPR013022">
    <property type="entry name" value="Xyl_isomerase-like_TIM-brl"/>
</dbReference>
<dbReference type="NCBIfam" id="TIGR00587">
    <property type="entry name" value="nfo"/>
    <property type="match status" value="1"/>
</dbReference>
<dbReference type="PANTHER" id="PTHR21445:SF0">
    <property type="entry name" value="APURINIC-APYRIMIDINIC ENDONUCLEASE"/>
    <property type="match status" value="1"/>
</dbReference>
<dbReference type="PANTHER" id="PTHR21445">
    <property type="entry name" value="ENDONUCLEASE IV ENDODEOXYRIBONUCLEASE IV"/>
    <property type="match status" value="1"/>
</dbReference>
<dbReference type="Pfam" id="PF01261">
    <property type="entry name" value="AP_endonuc_2"/>
    <property type="match status" value="1"/>
</dbReference>
<dbReference type="SMART" id="SM00518">
    <property type="entry name" value="AP2Ec"/>
    <property type="match status" value="1"/>
</dbReference>
<dbReference type="SUPFAM" id="SSF51658">
    <property type="entry name" value="Xylose isomerase-like"/>
    <property type="match status" value="1"/>
</dbReference>
<dbReference type="PROSITE" id="PS00730">
    <property type="entry name" value="AP_NUCLEASE_F2_2"/>
    <property type="match status" value="1"/>
</dbReference>
<dbReference type="PROSITE" id="PS51432">
    <property type="entry name" value="AP_NUCLEASE_F2_4"/>
    <property type="match status" value="1"/>
</dbReference>
<comment type="function">
    <text evidence="1">Endonuclease IV plays a role in DNA repair. It cleaves phosphodiester bonds at apurinic or apyrimidinic (AP) sites, generating a 3'-hydroxyl group and a 5'-terminal sugar phosphate.</text>
</comment>
<comment type="catalytic activity">
    <reaction evidence="1">
        <text>Endonucleolytic cleavage to 5'-phosphooligonucleotide end-products.</text>
        <dbReference type="EC" id="3.1.21.2"/>
    </reaction>
</comment>
<comment type="cofactor">
    <cofactor evidence="1">
        <name>Zn(2+)</name>
        <dbReference type="ChEBI" id="CHEBI:29105"/>
    </cofactor>
    <text evidence="1">Binds 3 Zn(2+) ions.</text>
</comment>
<comment type="similarity">
    <text evidence="1">Belongs to the AP endonuclease 2 family.</text>
</comment>